<reference key="1">
    <citation type="submission" date="2005-08" db="EMBL/GenBank/DDBJ databases">
        <title>Complete sequence of chromosome 1 of Nitrosospira multiformis ATCC 25196.</title>
        <authorList>
            <person name="Copeland A."/>
            <person name="Lucas S."/>
            <person name="Lapidus A."/>
            <person name="Barry K."/>
            <person name="Detter J.C."/>
            <person name="Glavina T."/>
            <person name="Hammon N."/>
            <person name="Israni S."/>
            <person name="Pitluck S."/>
            <person name="Chain P."/>
            <person name="Malfatti S."/>
            <person name="Shin M."/>
            <person name="Vergez L."/>
            <person name="Schmutz J."/>
            <person name="Larimer F."/>
            <person name="Land M."/>
            <person name="Hauser L."/>
            <person name="Kyrpides N."/>
            <person name="Lykidis A."/>
            <person name="Richardson P."/>
        </authorList>
    </citation>
    <scope>NUCLEOTIDE SEQUENCE [LARGE SCALE GENOMIC DNA]</scope>
    <source>
        <strain>ATCC 25196 / NCIMB 11849 / C 71</strain>
    </source>
</reference>
<evidence type="ECO:0000255" key="1">
    <source>
        <dbReference type="HAMAP-Rule" id="MF_00693"/>
    </source>
</evidence>
<name>Y2722_NITMU</name>
<sequence length="240" mass="26147">MAGHSKWANIKHKKAAQDAKRGKIFTRLIKEITVAARLGGGDPNSNPRLRLAVDKAYEQNMPKENVERAIKRGSGDLEGVNYEEIRYEGYGIAGAAVLVDCMTDNRVRTVADVRHAFTKYGGNLGTDGSVGFLFKHCGQLLFAPGTDEDKLMEVALEAGAEDIIAHDDGSIEVITAPYEFVAVKEALEKAGFKAELAEVTMKPVNETELTGDDSVKMQKLLDALESIDDVQEVYTTAVID</sequence>
<accession>Q2Y5G2</accession>
<organism>
    <name type="scientific">Nitrosospira multiformis (strain ATCC 25196 / NCIMB 11849 / C 71)</name>
    <dbReference type="NCBI Taxonomy" id="323848"/>
    <lineage>
        <taxon>Bacteria</taxon>
        <taxon>Pseudomonadati</taxon>
        <taxon>Pseudomonadota</taxon>
        <taxon>Betaproteobacteria</taxon>
        <taxon>Nitrosomonadales</taxon>
        <taxon>Nitrosomonadaceae</taxon>
        <taxon>Nitrosospira</taxon>
    </lineage>
</organism>
<gene>
    <name type="ordered locus">Nmul_A2722</name>
</gene>
<comment type="subcellular location">
    <subcellularLocation>
        <location evidence="1">Cytoplasm</location>
    </subcellularLocation>
</comment>
<comment type="similarity">
    <text evidence="1">Belongs to the TACO1 family.</text>
</comment>
<dbReference type="EMBL" id="CP000103">
    <property type="protein sequence ID" value="ABB76009.1"/>
    <property type="molecule type" value="Genomic_DNA"/>
</dbReference>
<dbReference type="RefSeq" id="WP_011382001.1">
    <property type="nucleotide sequence ID" value="NC_007614.1"/>
</dbReference>
<dbReference type="SMR" id="Q2Y5G2"/>
<dbReference type="STRING" id="323848.Nmul_A2722"/>
<dbReference type="KEGG" id="nmu:Nmul_A2722"/>
<dbReference type="eggNOG" id="COG0217">
    <property type="taxonomic scope" value="Bacteria"/>
</dbReference>
<dbReference type="HOGENOM" id="CLU_062974_2_2_4"/>
<dbReference type="OrthoDB" id="9781053at2"/>
<dbReference type="Proteomes" id="UP000002718">
    <property type="component" value="Chromosome"/>
</dbReference>
<dbReference type="GO" id="GO:0005829">
    <property type="term" value="C:cytosol"/>
    <property type="evidence" value="ECO:0007669"/>
    <property type="project" value="TreeGrafter"/>
</dbReference>
<dbReference type="GO" id="GO:0003677">
    <property type="term" value="F:DNA binding"/>
    <property type="evidence" value="ECO:0007669"/>
    <property type="project" value="UniProtKB-UniRule"/>
</dbReference>
<dbReference type="GO" id="GO:0006355">
    <property type="term" value="P:regulation of DNA-templated transcription"/>
    <property type="evidence" value="ECO:0007669"/>
    <property type="project" value="UniProtKB-UniRule"/>
</dbReference>
<dbReference type="FunFam" id="1.10.10.200:FF:000001">
    <property type="entry name" value="Probable transcriptional regulatory protein YebC"/>
    <property type="match status" value="1"/>
</dbReference>
<dbReference type="FunFam" id="3.30.70.980:FF:000002">
    <property type="entry name" value="Probable transcriptional regulatory protein YebC"/>
    <property type="match status" value="1"/>
</dbReference>
<dbReference type="Gene3D" id="1.10.10.200">
    <property type="match status" value="1"/>
</dbReference>
<dbReference type="Gene3D" id="3.30.70.980">
    <property type="match status" value="2"/>
</dbReference>
<dbReference type="HAMAP" id="MF_00693">
    <property type="entry name" value="Transcrip_reg_TACO1"/>
    <property type="match status" value="1"/>
</dbReference>
<dbReference type="InterPro" id="IPR017856">
    <property type="entry name" value="Integrase-like_N"/>
</dbReference>
<dbReference type="InterPro" id="IPR048300">
    <property type="entry name" value="TACO1_YebC-like_2nd/3rd_dom"/>
</dbReference>
<dbReference type="InterPro" id="IPR049083">
    <property type="entry name" value="TACO1_YebC_N"/>
</dbReference>
<dbReference type="InterPro" id="IPR002876">
    <property type="entry name" value="Transcrip_reg_TACO1-like"/>
</dbReference>
<dbReference type="InterPro" id="IPR026564">
    <property type="entry name" value="Transcrip_reg_TACO1-like_dom3"/>
</dbReference>
<dbReference type="InterPro" id="IPR029072">
    <property type="entry name" value="YebC-like"/>
</dbReference>
<dbReference type="NCBIfam" id="NF001030">
    <property type="entry name" value="PRK00110.1"/>
    <property type="match status" value="1"/>
</dbReference>
<dbReference type="NCBIfam" id="NF009044">
    <property type="entry name" value="PRK12378.1"/>
    <property type="match status" value="1"/>
</dbReference>
<dbReference type="NCBIfam" id="TIGR01033">
    <property type="entry name" value="YebC/PmpR family DNA-binding transcriptional regulator"/>
    <property type="match status" value="1"/>
</dbReference>
<dbReference type="PANTHER" id="PTHR12532:SF6">
    <property type="entry name" value="TRANSCRIPTIONAL REGULATORY PROTEIN YEBC-RELATED"/>
    <property type="match status" value="1"/>
</dbReference>
<dbReference type="PANTHER" id="PTHR12532">
    <property type="entry name" value="TRANSLATIONAL ACTIVATOR OF CYTOCHROME C OXIDASE 1"/>
    <property type="match status" value="1"/>
</dbReference>
<dbReference type="Pfam" id="PF20772">
    <property type="entry name" value="TACO1_YebC_N"/>
    <property type="match status" value="1"/>
</dbReference>
<dbReference type="Pfam" id="PF01709">
    <property type="entry name" value="Transcrip_reg"/>
    <property type="match status" value="1"/>
</dbReference>
<dbReference type="SUPFAM" id="SSF75625">
    <property type="entry name" value="YebC-like"/>
    <property type="match status" value="1"/>
</dbReference>
<keyword id="KW-0963">Cytoplasm</keyword>
<keyword id="KW-0238">DNA-binding</keyword>
<keyword id="KW-1185">Reference proteome</keyword>
<keyword id="KW-0804">Transcription</keyword>
<keyword id="KW-0805">Transcription regulation</keyword>
<feature type="chain" id="PRO_0000257091" description="Probable transcriptional regulatory protein Nmul_A2722">
    <location>
        <begin position="1"/>
        <end position="240"/>
    </location>
</feature>
<protein>
    <recommendedName>
        <fullName evidence="1">Probable transcriptional regulatory protein Nmul_A2722</fullName>
    </recommendedName>
</protein>
<proteinExistence type="inferred from homology"/>